<name>EI3G1_DROGR</name>
<evidence type="ECO:0000250" key="1">
    <source>
        <dbReference type="UniProtKB" id="Q9W4X7"/>
    </source>
</evidence>
<evidence type="ECO:0000255" key="2">
    <source>
        <dbReference type="HAMAP-Rule" id="MF_03006"/>
    </source>
</evidence>
<organism>
    <name type="scientific">Drosophila grimshawi</name>
    <name type="common">Hawaiian fruit fly</name>
    <name type="synonym">Idiomyia grimshawi</name>
    <dbReference type="NCBI Taxonomy" id="7222"/>
    <lineage>
        <taxon>Eukaryota</taxon>
        <taxon>Metazoa</taxon>
        <taxon>Ecdysozoa</taxon>
        <taxon>Arthropoda</taxon>
        <taxon>Hexapoda</taxon>
        <taxon>Insecta</taxon>
        <taxon>Pterygota</taxon>
        <taxon>Neoptera</taxon>
        <taxon>Endopterygota</taxon>
        <taxon>Diptera</taxon>
        <taxon>Brachycera</taxon>
        <taxon>Muscomorpha</taxon>
        <taxon>Ephydroidea</taxon>
        <taxon>Drosophilidae</taxon>
        <taxon>Drosophila</taxon>
        <taxon>Hawaiian Drosophila</taxon>
    </lineage>
</organism>
<proteinExistence type="inferred from homology"/>
<dbReference type="EMBL" id="CH916367">
    <property type="protein sequence ID" value="EDW01650.1"/>
    <property type="molecule type" value="Genomic_DNA"/>
</dbReference>
<dbReference type="SMR" id="B4J4G8"/>
<dbReference type="FunCoup" id="B4J4G8">
    <property type="interactions" value="1693"/>
</dbReference>
<dbReference type="STRING" id="7222.B4J4G8"/>
<dbReference type="EnsemblMetazoa" id="FBtr0156973">
    <property type="protein sequence ID" value="FBpp0155465"/>
    <property type="gene ID" value="FBgn0129021"/>
</dbReference>
<dbReference type="EnsemblMetazoa" id="XM_001986747.3">
    <property type="protein sequence ID" value="XP_001986783.1"/>
    <property type="gene ID" value="LOC6559101"/>
</dbReference>
<dbReference type="GeneID" id="6559101"/>
<dbReference type="KEGG" id="dgr:6559101"/>
<dbReference type="eggNOG" id="KOG0122">
    <property type="taxonomic scope" value="Eukaryota"/>
</dbReference>
<dbReference type="HOGENOM" id="CLU_034595_0_0_1"/>
<dbReference type="InParanoid" id="B4J4G8"/>
<dbReference type="OMA" id="IVNPYPN"/>
<dbReference type="OrthoDB" id="639027at2759"/>
<dbReference type="PhylomeDB" id="B4J4G8"/>
<dbReference type="Proteomes" id="UP000001070">
    <property type="component" value="Unassembled WGS sequence"/>
</dbReference>
<dbReference type="GO" id="GO:0016282">
    <property type="term" value="C:eukaryotic 43S preinitiation complex"/>
    <property type="evidence" value="ECO:0007669"/>
    <property type="project" value="UniProtKB-UniRule"/>
</dbReference>
<dbReference type="GO" id="GO:0033290">
    <property type="term" value="C:eukaryotic 48S preinitiation complex"/>
    <property type="evidence" value="ECO:0007669"/>
    <property type="project" value="UniProtKB-UniRule"/>
</dbReference>
<dbReference type="GO" id="GO:0005852">
    <property type="term" value="C:eukaryotic translation initiation factor 3 complex"/>
    <property type="evidence" value="ECO:0007669"/>
    <property type="project" value="UniProtKB-UniRule"/>
</dbReference>
<dbReference type="GO" id="GO:0003723">
    <property type="term" value="F:RNA binding"/>
    <property type="evidence" value="ECO:0007669"/>
    <property type="project" value="UniProtKB-UniRule"/>
</dbReference>
<dbReference type="GO" id="GO:0003743">
    <property type="term" value="F:translation initiation factor activity"/>
    <property type="evidence" value="ECO:0007669"/>
    <property type="project" value="UniProtKB-UniRule"/>
</dbReference>
<dbReference type="GO" id="GO:0001732">
    <property type="term" value="P:formation of cytoplasmic translation initiation complex"/>
    <property type="evidence" value="ECO:0007669"/>
    <property type="project" value="UniProtKB-UniRule"/>
</dbReference>
<dbReference type="CDD" id="cd12933">
    <property type="entry name" value="eIF3G"/>
    <property type="match status" value="1"/>
</dbReference>
<dbReference type="CDD" id="cd12408">
    <property type="entry name" value="RRM_eIF3G_like"/>
    <property type="match status" value="1"/>
</dbReference>
<dbReference type="FunFam" id="3.30.70.330:FF:000828">
    <property type="entry name" value="Eukaryotic translation initiation factor 3 subunit G"/>
    <property type="match status" value="1"/>
</dbReference>
<dbReference type="Gene3D" id="3.30.70.330">
    <property type="match status" value="1"/>
</dbReference>
<dbReference type="HAMAP" id="MF_03006">
    <property type="entry name" value="eIF3g"/>
    <property type="match status" value="1"/>
</dbReference>
<dbReference type="InterPro" id="IPR017334">
    <property type="entry name" value="eIF3_g"/>
</dbReference>
<dbReference type="InterPro" id="IPR024675">
    <property type="entry name" value="eIF3g_N"/>
</dbReference>
<dbReference type="InterPro" id="IPR034240">
    <property type="entry name" value="eIF3G_RRM"/>
</dbReference>
<dbReference type="InterPro" id="IPR012677">
    <property type="entry name" value="Nucleotide-bd_a/b_plait_sf"/>
</dbReference>
<dbReference type="InterPro" id="IPR035979">
    <property type="entry name" value="RBD_domain_sf"/>
</dbReference>
<dbReference type="InterPro" id="IPR000504">
    <property type="entry name" value="RRM_dom"/>
</dbReference>
<dbReference type="PANTHER" id="PTHR10352">
    <property type="entry name" value="EUKARYOTIC TRANSLATION INITIATION FACTOR 3 SUBUNIT G"/>
    <property type="match status" value="1"/>
</dbReference>
<dbReference type="Pfam" id="PF12353">
    <property type="entry name" value="eIF3g"/>
    <property type="match status" value="1"/>
</dbReference>
<dbReference type="Pfam" id="PF00076">
    <property type="entry name" value="RRM_1"/>
    <property type="match status" value="1"/>
</dbReference>
<dbReference type="PIRSF" id="PIRSF037949">
    <property type="entry name" value="Transl_init_eIF-3_RNA-bind"/>
    <property type="match status" value="1"/>
</dbReference>
<dbReference type="SMART" id="SM00360">
    <property type="entry name" value="RRM"/>
    <property type="match status" value="1"/>
</dbReference>
<dbReference type="SUPFAM" id="SSF54928">
    <property type="entry name" value="RNA-binding domain, RBD"/>
    <property type="match status" value="1"/>
</dbReference>
<dbReference type="PROSITE" id="PS50102">
    <property type="entry name" value="RRM"/>
    <property type="match status" value="1"/>
</dbReference>
<comment type="function">
    <text evidence="2">RNA-binding component of the eukaryotic translation initiation factor 3 (eIF-3) complex, which is involved in protein synthesis of a specialized repertoire of mRNAs and, together with other initiation factors, stimulates binding of mRNA and methionyl-tRNAi to the 40S ribosome. The eIF-3 complex specifically targets and initiates translation of a subset of mRNAs involved in cell proliferation. This subunit can bind 18S rRNA.</text>
</comment>
<comment type="subunit">
    <text evidence="2">Component of the eukaryotic translation initiation factor 3 (eIF-3) complex. The eIF-3 complex interacts with pix.</text>
</comment>
<comment type="subcellular location">
    <subcellularLocation>
        <location evidence="2">Cytoplasm</location>
    </subcellularLocation>
</comment>
<comment type="similarity">
    <text evidence="2">Belongs to the eIF-3 subunit G family.</text>
</comment>
<reference key="1">
    <citation type="journal article" date="2007" name="Nature">
        <title>Evolution of genes and genomes on the Drosophila phylogeny.</title>
        <authorList>
            <consortium name="Drosophila 12 genomes consortium"/>
        </authorList>
    </citation>
    <scope>NUCLEOTIDE SEQUENCE [LARGE SCALE GENOMIC DNA]</scope>
    <source>
        <strain>Tucson 15287-2541.00</strain>
    </source>
</reference>
<accession>B4J4G8</accession>
<sequence>MPGIETIKSSWADEVELDYGGLPPTTETIENGHKYVTEYKYNKDDKKTKVVRTYKITKQVVPKTVAKRRTWAKFGESKNDKPGPNSQTTMVSEDIIMQFINSKEDEKANDPLLDPSKNIAKCRICNGEHWSVNCPYKGTAMDTNLMEKKAAAAASAAVDAPKSGKYVPPFLKDSQKGGMGIRGRDDTAAIRISNLSESMTEADLEELVKKIGPQSKMYLARDKNTGLCKGFAYVHFKQRKDAAAAIEILNGHGYDHLILSVEWSKPQNT</sequence>
<feature type="chain" id="PRO_0000365411" description="Eukaryotic translation initiation factor 3 subunit G-1">
    <location>
        <begin position="1"/>
        <end position="269"/>
    </location>
</feature>
<feature type="domain" description="RRM" evidence="2">
    <location>
        <begin position="188"/>
        <end position="266"/>
    </location>
</feature>
<protein>
    <recommendedName>
        <fullName evidence="1">Eukaryotic translation initiation factor 3 subunit G-1</fullName>
    </recommendedName>
    <alternativeName>
        <fullName evidence="2">Eukaryotic translation initiation factor 3 RNA-binding subunit 1</fullName>
        <shortName evidence="2">eIF-3 RNA-binding subunit 1</shortName>
    </alternativeName>
    <alternativeName>
        <fullName evidence="2">Eukaryotic translation initiation factor 3 subunit 4-1</fullName>
    </alternativeName>
</protein>
<keyword id="KW-0963">Cytoplasm</keyword>
<keyword id="KW-0396">Initiation factor</keyword>
<keyword id="KW-0648">Protein biosynthesis</keyword>
<keyword id="KW-1185">Reference proteome</keyword>
<keyword id="KW-0694">RNA-binding</keyword>
<gene>
    <name evidence="1" type="primary">eIF3g1</name>
    <name evidence="2" type="synonym">eIF3-S4</name>
    <name evidence="1" type="synonym">eIF3ga</name>
    <name type="ORF">GH21559</name>
</gene>